<reference key="1">
    <citation type="journal article" date="2011" name="Stand. Genomic Sci.">
        <title>Complete genome sequence of the halophilic and highly halotolerant Chromohalobacter salexigens type strain (1H11(T)).</title>
        <authorList>
            <person name="Copeland A."/>
            <person name="O'Connor K."/>
            <person name="Lucas S."/>
            <person name="Lapidus A."/>
            <person name="Berry K.W."/>
            <person name="Detter J.C."/>
            <person name="Del Rio T.G."/>
            <person name="Hammon N."/>
            <person name="Dalin E."/>
            <person name="Tice H."/>
            <person name="Pitluck S."/>
            <person name="Bruce D."/>
            <person name="Goodwin L."/>
            <person name="Han C."/>
            <person name="Tapia R."/>
            <person name="Saunders E."/>
            <person name="Schmutz J."/>
            <person name="Brettin T."/>
            <person name="Larimer F."/>
            <person name="Land M."/>
            <person name="Hauser L."/>
            <person name="Vargas C."/>
            <person name="Nieto J.J."/>
            <person name="Kyrpides N.C."/>
            <person name="Ivanova N."/>
            <person name="Goker M."/>
            <person name="Klenk H.P."/>
            <person name="Csonka L.N."/>
            <person name="Woyke T."/>
        </authorList>
    </citation>
    <scope>NUCLEOTIDE SEQUENCE [LARGE SCALE GENOMIC DNA]</scope>
    <source>
        <strain>ATCC BAA-138 / DSM 3043 / CIP 106854 / NCIMB 13768 / 1H11</strain>
    </source>
</reference>
<protein>
    <recommendedName>
        <fullName evidence="1">DNA-directed RNA polymerase subunit omega</fullName>
        <shortName evidence="1">RNAP omega subunit</shortName>
        <ecNumber evidence="1">2.7.7.6</ecNumber>
    </recommendedName>
    <alternativeName>
        <fullName evidence="1">RNA polymerase omega subunit</fullName>
    </alternativeName>
    <alternativeName>
        <fullName evidence="1">Transcriptase subunit omega</fullName>
    </alternativeName>
</protein>
<sequence length="83" mass="9390">MARVTVEDCLDNVDNRFQLVMVATQRSRQLARGSRDAQLPWENDKPTVMALREIAAGLVDRSILNEAVEPPAAKPRPEREFND</sequence>
<evidence type="ECO:0000255" key="1">
    <source>
        <dbReference type="HAMAP-Rule" id="MF_00366"/>
    </source>
</evidence>
<keyword id="KW-0240">DNA-directed RNA polymerase</keyword>
<keyword id="KW-0548">Nucleotidyltransferase</keyword>
<keyword id="KW-1185">Reference proteome</keyword>
<keyword id="KW-0804">Transcription</keyword>
<keyword id="KW-0808">Transferase</keyword>
<feature type="chain" id="PRO_1000005908" description="DNA-directed RNA polymerase subunit omega">
    <location>
        <begin position="1"/>
        <end position="83"/>
    </location>
</feature>
<dbReference type="EC" id="2.7.7.6" evidence="1"/>
<dbReference type="EMBL" id="CP000285">
    <property type="protein sequence ID" value="ABE60578.1"/>
    <property type="molecule type" value="Genomic_DNA"/>
</dbReference>
<dbReference type="RefSeq" id="WP_011508524.1">
    <property type="nucleotide sequence ID" value="NC_007963.1"/>
</dbReference>
<dbReference type="SMR" id="Q1QSI0"/>
<dbReference type="STRING" id="290398.Csal_3234"/>
<dbReference type="GeneID" id="95335926"/>
<dbReference type="KEGG" id="csa:Csal_3234"/>
<dbReference type="eggNOG" id="COG1758">
    <property type="taxonomic scope" value="Bacteria"/>
</dbReference>
<dbReference type="HOGENOM" id="CLU_125406_5_2_6"/>
<dbReference type="OrthoDB" id="9796300at2"/>
<dbReference type="Proteomes" id="UP000000239">
    <property type="component" value="Chromosome"/>
</dbReference>
<dbReference type="GO" id="GO:0000428">
    <property type="term" value="C:DNA-directed RNA polymerase complex"/>
    <property type="evidence" value="ECO:0007669"/>
    <property type="project" value="UniProtKB-KW"/>
</dbReference>
<dbReference type="GO" id="GO:0003677">
    <property type="term" value="F:DNA binding"/>
    <property type="evidence" value="ECO:0007669"/>
    <property type="project" value="UniProtKB-UniRule"/>
</dbReference>
<dbReference type="GO" id="GO:0003899">
    <property type="term" value="F:DNA-directed RNA polymerase activity"/>
    <property type="evidence" value="ECO:0007669"/>
    <property type="project" value="UniProtKB-UniRule"/>
</dbReference>
<dbReference type="GO" id="GO:0006351">
    <property type="term" value="P:DNA-templated transcription"/>
    <property type="evidence" value="ECO:0007669"/>
    <property type="project" value="UniProtKB-UniRule"/>
</dbReference>
<dbReference type="Gene3D" id="3.90.940.10">
    <property type="match status" value="1"/>
</dbReference>
<dbReference type="HAMAP" id="MF_00366">
    <property type="entry name" value="RNApol_bact_RpoZ"/>
    <property type="match status" value="1"/>
</dbReference>
<dbReference type="InterPro" id="IPR003716">
    <property type="entry name" value="DNA-dir_RNA_pol_omega"/>
</dbReference>
<dbReference type="InterPro" id="IPR006110">
    <property type="entry name" value="Pol_omega/Rpo6/RPB6"/>
</dbReference>
<dbReference type="InterPro" id="IPR036161">
    <property type="entry name" value="RPB6/omega-like_sf"/>
</dbReference>
<dbReference type="NCBIfam" id="TIGR00690">
    <property type="entry name" value="rpoZ"/>
    <property type="match status" value="1"/>
</dbReference>
<dbReference type="PANTHER" id="PTHR34476">
    <property type="entry name" value="DNA-DIRECTED RNA POLYMERASE SUBUNIT OMEGA"/>
    <property type="match status" value="1"/>
</dbReference>
<dbReference type="PANTHER" id="PTHR34476:SF1">
    <property type="entry name" value="DNA-DIRECTED RNA POLYMERASE SUBUNIT OMEGA"/>
    <property type="match status" value="1"/>
</dbReference>
<dbReference type="Pfam" id="PF01192">
    <property type="entry name" value="RNA_pol_Rpb6"/>
    <property type="match status" value="1"/>
</dbReference>
<dbReference type="SMART" id="SM01409">
    <property type="entry name" value="RNA_pol_Rpb6"/>
    <property type="match status" value="1"/>
</dbReference>
<dbReference type="SUPFAM" id="SSF63562">
    <property type="entry name" value="RPB6/omega subunit-like"/>
    <property type="match status" value="1"/>
</dbReference>
<comment type="function">
    <text evidence="1">Promotes RNA polymerase assembly. Latches the N- and C-terminal regions of the beta' subunit thereby facilitating its interaction with the beta and alpha subunits.</text>
</comment>
<comment type="catalytic activity">
    <reaction evidence="1">
        <text>RNA(n) + a ribonucleoside 5'-triphosphate = RNA(n+1) + diphosphate</text>
        <dbReference type="Rhea" id="RHEA:21248"/>
        <dbReference type="Rhea" id="RHEA-COMP:14527"/>
        <dbReference type="Rhea" id="RHEA-COMP:17342"/>
        <dbReference type="ChEBI" id="CHEBI:33019"/>
        <dbReference type="ChEBI" id="CHEBI:61557"/>
        <dbReference type="ChEBI" id="CHEBI:140395"/>
        <dbReference type="EC" id="2.7.7.6"/>
    </reaction>
</comment>
<comment type="subunit">
    <text evidence="1">The RNAP catalytic core consists of 2 alpha, 1 beta, 1 beta' and 1 omega subunit. When a sigma factor is associated with the core the holoenzyme is formed, which can initiate transcription.</text>
</comment>
<comment type="similarity">
    <text evidence="1">Belongs to the RNA polymerase subunit omega family.</text>
</comment>
<accession>Q1QSI0</accession>
<name>RPOZ_CHRSD</name>
<proteinExistence type="inferred from homology"/>
<gene>
    <name evidence="1" type="primary">rpoZ</name>
    <name type="ordered locus">Csal_3234</name>
</gene>
<organism>
    <name type="scientific">Chromohalobacter salexigens (strain ATCC BAA-138 / DSM 3043 / CIP 106854 / NCIMB 13768 / 1H11)</name>
    <dbReference type="NCBI Taxonomy" id="290398"/>
    <lineage>
        <taxon>Bacteria</taxon>
        <taxon>Pseudomonadati</taxon>
        <taxon>Pseudomonadota</taxon>
        <taxon>Gammaproteobacteria</taxon>
        <taxon>Oceanospirillales</taxon>
        <taxon>Halomonadaceae</taxon>
        <taxon>Chromohalobacter</taxon>
    </lineage>
</organism>